<accession>B2JD61</accession>
<proteinExistence type="inferred from homology"/>
<organism>
    <name type="scientific">Paraburkholderia phymatum (strain DSM 17167 / CIP 108236 / LMG 21445 / STM815)</name>
    <name type="common">Burkholderia phymatum</name>
    <dbReference type="NCBI Taxonomy" id="391038"/>
    <lineage>
        <taxon>Bacteria</taxon>
        <taxon>Pseudomonadati</taxon>
        <taxon>Pseudomonadota</taxon>
        <taxon>Betaproteobacteria</taxon>
        <taxon>Burkholderiales</taxon>
        <taxon>Burkholderiaceae</taxon>
        <taxon>Paraburkholderia</taxon>
    </lineage>
</organism>
<evidence type="ECO:0000255" key="1">
    <source>
        <dbReference type="HAMAP-Rule" id="MF_01123"/>
    </source>
</evidence>
<protein>
    <recommendedName>
        <fullName evidence="1">Acetyl-coenzyme A synthetase</fullName>
        <shortName evidence="1">AcCoA synthetase</shortName>
        <shortName evidence="1">Acs</shortName>
        <ecNumber evidence="1">6.2.1.1</ecNumber>
    </recommendedName>
    <alternativeName>
        <fullName evidence="1">Acetate--CoA ligase</fullName>
    </alternativeName>
    <alternativeName>
        <fullName evidence="1">Acyl-activating enzyme</fullName>
    </alternativeName>
</protein>
<comment type="function">
    <text evidence="1">Catalyzes the conversion of acetate into acetyl-CoA (AcCoA), an essential intermediate at the junction of anabolic and catabolic pathways. AcsA undergoes a two-step reaction. In the first half reaction, AcsA combines acetate with ATP to form acetyl-adenylate (AcAMP) intermediate. In the second half reaction, it can then transfer the acetyl group from AcAMP to the sulfhydryl group of CoA, forming the product AcCoA.</text>
</comment>
<comment type="catalytic activity">
    <reaction evidence="1">
        <text>acetate + ATP + CoA = acetyl-CoA + AMP + diphosphate</text>
        <dbReference type="Rhea" id="RHEA:23176"/>
        <dbReference type="ChEBI" id="CHEBI:30089"/>
        <dbReference type="ChEBI" id="CHEBI:30616"/>
        <dbReference type="ChEBI" id="CHEBI:33019"/>
        <dbReference type="ChEBI" id="CHEBI:57287"/>
        <dbReference type="ChEBI" id="CHEBI:57288"/>
        <dbReference type="ChEBI" id="CHEBI:456215"/>
        <dbReference type="EC" id="6.2.1.1"/>
    </reaction>
</comment>
<comment type="cofactor">
    <cofactor evidence="1">
        <name>Mg(2+)</name>
        <dbReference type="ChEBI" id="CHEBI:18420"/>
    </cofactor>
</comment>
<comment type="PTM">
    <text evidence="1">Acetylated. Deacetylation by the SIR2-homolog deacetylase activates the enzyme.</text>
</comment>
<comment type="similarity">
    <text evidence="1">Belongs to the ATP-dependent AMP-binding enzyme family.</text>
</comment>
<name>ACSA_PARP8</name>
<sequence length="660" mass="72379">MSAIESVLQERRVFQPSAEVAAQATVSGMDAYKALVAEAERDYEGFWGRLARETLSWNKPFTKVLDESNAPFYKWYDDGELNASYNSIDRHVEAGNGERVAIIFEADDGTITNVTYNDLLQRVSRFANALKQRGIKKGDRVVIYMPMSVEGIVAMQACARIGATHSVVFGGFSSKSLNERLVDVGAVALVTSDEQMRGGKALPLKNIADEALAMGGCEAVKSVIVYQRTGGKIGWDDKRDLWMHEITASESDHCPPEWVGAEHPLFILYTSGSTGKPKGVQHSTGGYLLWAAQTMKWTFDWKPTDVFWCTADIGWVTGHSYITYGPLTLGGTQVVFEGVPTYPNAGRFWDMIQKHKVTVFYTAPTAIRSLIKAAEADPKVHPKSYDLSTLRIIGTVGEPINPEAWVWYYENVGGSRCPIVDTWWQTETGGHMITPLPGATPLVPGSCTLPLPGIMAAVVDETGQDVPNGQGGILVVKRPWPSMIRTIWGDPERYKKSYFPEELGGTLYLAGDGSVRDKETGYFTIMGRIDDVLNVSGHRLGTMEIESALVANPLVAEAAVVGRPDDTTGEAVCAFVVLKRARPEGEEAAKIAADLRNWVGKEIGPIAKPKDIRFGDNLPKTRSGKIMRRLLRSLAKGEEITQDVSTLENPAILDQLGESR</sequence>
<dbReference type="EC" id="6.2.1.1" evidence="1"/>
<dbReference type="EMBL" id="CP001043">
    <property type="protein sequence ID" value="ACC71117.1"/>
    <property type="molecule type" value="Genomic_DNA"/>
</dbReference>
<dbReference type="RefSeq" id="WP_012401327.1">
    <property type="nucleotide sequence ID" value="NC_010622.1"/>
</dbReference>
<dbReference type="SMR" id="B2JD61"/>
<dbReference type="STRING" id="391038.Bphy_1938"/>
<dbReference type="KEGG" id="bph:Bphy_1938"/>
<dbReference type="eggNOG" id="COG0365">
    <property type="taxonomic scope" value="Bacteria"/>
</dbReference>
<dbReference type="HOGENOM" id="CLU_000022_3_6_4"/>
<dbReference type="OrthoDB" id="9766486at2"/>
<dbReference type="Proteomes" id="UP000001192">
    <property type="component" value="Chromosome 1"/>
</dbReference>
<dbReference type="GO" id="GO:0005829">
    <property type="term" value="C:cytosol"/>
    <property type="evidence" value="ECO:0007669"/>
    <property type="project" value="TreeGrafter"/>
</dbReference>
<dbReference type="GO" id="GO:0003987">
    <property type="term" value="F:acetate-CoA ligase activity"/>
    <property type="evidence" value="ECO:0007669"/>
    <property type="project" value="UniProtKB-UniRule"/>
</dbReference>
<dbReference type="GO" id="GO:0016208">
    <property type="term" value="F:AMP binding"/>
    <property type="evidence" value="ECO:0007669"/>
    <property type="project" value="InterPro"/>
</dbReference>
<dbReference type="GO" id="GO:0005524">
    <property type="term" value="F:ATP binding"/>
    <property type="evidence" value="ECO:0007669"/>
    <property type="project" value="UniProtKB-KW"/>
</dbReference>
<dbReference type="GO" id="GO:0046872">
    <property type="term" value="F:metal ion binding"/>
    <property type="evidence" value="ECO:0007669"/>
    <property type="project" value="UniProtKB-KW"/>
</dbReference>
<dbReference type="GO" id="GO:0019427">
    <property type="term" value="P:acetyl-CoA biosynthetic process from acetate"/>
    <property type="evidence" value="ECO:0007669"/>
    <property type="project" value="InterPro"/>
</dbReference>
<dbReference type="CDD" id="cd05966">
    <property type="entry name" value="ACS"/>
    <property type="match status" value="1"/>
</dbReference>
<dbReference type="FunFam" id="3.40.50.12780:FF:000001">
    <property type="entry name" value="Acetyl-coenzyme A synthetase"/>
    <property type="match status" value="1"/>
</dbReference>
<dbReference type="Gene3D" id="3.30.300.30">
    <property type="match status" value="1"/>
</dbReference>
<dbReference type="Gene3D" id="3.40.50.12780">
    <property type="entry name" value="N-terminal domain of ligase-like"/>
    <property type="match status" value="1"/>
</dbReference>
<dbReference type="HAMAP" id="MF_01123">
    <property type="entry name" value="Ac_CoA_synth"/>
    <property type="match status" value="1"/>
</dbReference>
<dbReference type="InterPro" id="IPR011904">
    <property type="entry name" value="Ac_CoA_lig"/>
</dbReference>
<dbReference type="InterPro" id="IPR032387">
    <property type="entry name" value="ACAS_N"/>
</dbReference>
<dbReference type="InterPro" id="IPR025110">
    <property type="entry name" value="AMP-bd_C"/>
</dbReference>
<dbReference type="InterPro" id="IPR045851">
    <property type="entry name" value="AMP-bd_C_sf"/>
</dbReference>
<dbReference type="InterPro" id="IPR020845">
    <property type="entry name" value="AMP-binding_CS"/>
</dbReference>
<dbReference type="InterPro" id="IPR000873">
    <property type="entry name" value="AMP-dep_synth/lig_dom"/>
</dbReference>
<dbReference type="InterPro" id="IPR042099">
    <property type="entry name" value="ANL_N_sf"/>
</dbReference>
<dbReference type="NCBIfam" id="TIGR02188">
    <property type="entry name" value="Ac_CoA_lig_AcsA"/>
    <property type="match status" value="1"/>
</dbReference>
<dbReference type="NCBIfam" id="NF001208">
    <property type="entry name" value="PRK00174.1"/>
    <property type="match status" value="1"/>
</dbReference>
<dbReference type="PANTHER" id="PTHR24095">
    <property type="entry name" value="ACETYL-COENZYME A SYNTHETASE"/>
    <property type="match status" value="1"/>
</dbReference>
<dbReference type="PANTHER" id="PTHR24095:SF14">
    <property type="entry name" value="ACETYL-COENZYME A SYNTHETASE 1"/>
    <property type="match status" value="1"/>
</dbReference>
<dbReference type="Pfam" id="PF16177">
    <property type="entry name" value="ACAS_N"/>
    <property type="match status" value="1"/>
</dbReference>
<dbReference type="Pfam" id="PF00501">
    <property type="entry name" value="AMP-binding"/>
    <property type="match status" value="1"/>
</dbReference>
<dbReference type="Pfam" id="PF13193">
    <property type="entry name" value="AMP-binding_C"/>
    <property type="match status" value="1"/>
</dbReference>
<dbReference type="SUPFAM" id="SSF56801">
    <property type="entry name" value="Acetyl-CoA synthetase-like"/>
    <property type="match status" value="1"/>
</dbReference>
<dbReference type="PROSITE" id="PS00455">
    <property type="entry name" value="AMP_BINDING"/>
    <property type="match status" value="1"/>
</dbReference>
<reference key="1">
    <citation type="journal article" date="2014" name="Stand. Genomic Sci.">
        <title>Complete genome sequence of Burkholderia phymatum STM815(T), a broad host range and efficient nitrogen-fixing symbiont of Mimosa species.</title>
        <authorList>
            <person name="Moulin L."/>
            <person name="Klonowska A."/>
            <person name="Caroline B."/>
            <person name="Booth K."/>
            <person name="Vriezen J.A."/>
            <person name="Melkonian R."/>
            <person name="James E.K."/>
            <person name="Young J.P."/>
            <person name="Bena G."/>
            <person name="Hauser L."/>
            <person name="Land M."/>
            <person name="Kyrpides N."/>
            <person name="Bruce D."/>
            <person name="Chain P."/>
            <person name="Copeland A."/>
            <person name="Pitluck S."/>
            <person name="Woyke T."/>
            <person name="Lizotte-Waniewski M."/>
            <person name="Bristow J."/>
            <person name="Riley M."/>
        </authorList>
    </citation>
    <scope>NUCLEOTIDE SEQUENCE [LARGE SCALE GENOMIC DNA]</scope>
    <source>
        <strain>DSM 17167 / CIP 108236 / LMG 21445 / STM815</strain>
    </source>
</reference>
<feature type="chain" id="PRO_1000137261" description="Acetyl-coenzyme A synthetase">
    <location>
        <begin position="1"/>
        <end position="660"/>
    </location>
</feature>
<feature type="binding site" evidence="1">
    <location>
        <begin position="197"/>
        <end position="200"/>
    </location>
    <ligand>
        <name>CoA</name>
        <dbReference type="ChEBI" id="CHEBI:57287"/>
    </ligand>
</feature>
<feature type="binding site" evidence="1">
    <location>
        <position position="317"/>
    </location>
    <ligand>
        <name>CoA</name>
        <dbReference type="ChEBI" id="CHEBI:57287"/>
    </ligand>
</feature>
<feature type="binding site" evidence="1">
    <location>
        <begin position="397"/>
        <end position="399"/>
    </location>
    <ligand>
        <name>ATP</name>
        <dbReference type="ChEBI" id="CHEBI:30616"/>
    </ligand>
</feature>
<feature type="binding site" evidence="1">
    <location>
        <begin position="421"/>
        <end position="426"/>
    </location>
    <ligand>
        <name>ATP</name>
        <dbReference type="ChEBI" id="CHEBI:30616"/>
    </ligand>
</feature>
<feature type="binding site" evidence="1">
    <location>
        <position position="512"/>
    </location>
    <ligand>
        <name>ATP</name>
        <dbReference type="ChEBI" id="CHEBI:30616"/>
    </ligand>
</feature>
<feature type="binding site" evidence="1">
    <location>
        <position position="528"/>
    </location>
    <ligand>
        <name>ATP</name>
        <dbReference type="ChEBI" id="CHEBI:30616"/>
    </ligand>
</feature>
<feature type="binding site" evidence="1">
    <location>
        <position position="536"/>
    </location>
    <ligand>
        <name>CoA</name>
        <dbReference type="ChEBI" id="CHEBI:57287"/>
    </ligand>
</feature>
<feature type="binding site" evidence="1">
    <location>
        <position position="539"/>
    </location>
    <ligand>
        <name>ATP</name>
        <dbReference type="ChEBI" id="CHEBI:30616"/>
    </ligand>
</feature>
<feature type="binding site" evidence="1">
    <location>
        <position position="550"/>
    </location>
    <ligand>
        <name>Mg(2+)</name>
        <dbReference type="ChEBI" id="CHEBI:18420"/>
    </ligand>
</feature>
<feature type="binding site" evidence="1">
    <location>
        <position position="555"/>
    </location>
    <ligand>
        <name>Mg(2+)</name>
        <dbReference type="ChEBI" id="CHEBI:18420"/>
    </ligand>
</feature>
<feature type="modified residue" description="N6-acetyllysine" evidence="1">
    <location>
        <position position="625"/>
    </location>
</feature>
<keyword id="KW-0007">Acetylation</keyword>
<keyword id="KW-0067">ATP-binding</keyword>
<keyword id="KW-0436">Ligase</keyword>
<keyword id="KW-0460">Magnesium</keyword>
<keyword id="KW-0479">Metal-binding</keyword>
<keyword id="KW-0547">Nucleotide-binding</keyword>
<keyword id="KW-1185">Reference proteome</keyword>
<gene>
    <name evidence="1" type="primary">acsA</name>
    <name type="ordered locus">Bphy_1938</name>
</gene>